<feature type="chain" id="PRO_1000050490" description="Ketol-acid reductoisomerase (NADP(+))">
    <location>
        <begin position="1"/>
        <end position="338"/>
    </location>
</feature>
<feature type="domain" description="KARI N-terminal Rossmann" evidence="2">
    <location>
        <begin position="1"/>
        <end position="181"/>
    </location>
</feature>
<feature type="domain" description="KARI C-terminal knotted" evidence="3">
    <location>
        <begin position="182"/>
        <end position="327"/>
    </location>
</feature>
<feature type="active site" evidence="1">
    <location>
        <position position="107"/>
    </location>
</feature>
<feature type="binding site" evidence="1">
    <location>
        <begin position="24"/>
        <end position="27"/>
    </location>
    <ligand>
        <name>NADP(+)</name>
        <dbReference type="ChEBI" id="CHEBI:58349"/>
    </ligand>
</feature>
<feature type="binding site" evidence="1">
    <location>
        <position position="47"/>
    </location>
    <ligand>
        <name>NADP(+)</name>
        <dbReference type="ChEBI" id="CHEBI:58349"/>
    </ligand>
</feature>
<feature type="binding site" evidence="1">
    <location>
        <position position="52"/>
    </location>
    <ligand>
        <name>NADP(+)</name>
        <dbReference type="ChEBI" id="CHEBI:58349"/>
    </ligand>
</feature>
<feature type="binding site" evidence="1">
    <location>
        <position position="133"/>
    </location>
    <ligand>
        <name>NADP(+)</name>
        <dbReference type="ChEBI" id="CHEBI:58349"/>
    </ligand>
</feature>
<feature type="binding site" evidence="1">
    <location>
        <position position="190"/>
    </location>
    <ligand>
        <name>Mg(2+)</name>
        <dbReference type="ChEBI" id="CHEBI:18420"/>
        <label>1</label>
    </ligand>
</feature>
<feature type="binding site" evidence="1">
    <location>
        <position position="190"/>
    </location>
    <ligand>
        <name>Mg(2+)</name>
        <dbReference type="ChEBI" id="CHEBI:18420"/>
        <label>2</label>
    </ligand>
</feature>
<feature type="binding site" evidence="1">
    <location>
        <position position="194"/>
    </location>
    <ligand>
        <name>Mg(2+)</name>
        <dbReference type="ChEBI" id="CHEBI:18420"/>
        <label>1</label>
    </ligand>
</feature>
<feature type="binding site" evidence="1">
    <location>
        <position position="226"/>
    </location>
    <ligand>
        <name>Mg(2+)</name>
        <dbReference type="ChEBI" id="CHEBI:18420"/>
        <label>2</label>
    </ligand>
</feature>
<feature type="binding site" evidence="1">
    <location>
        <position position="230"/>
    </location>
    <ligand>
        <name>Mg(2+)</name>
        <dbReference type="ChEBI" id="CHEBI:18420"/>
        <label>2</label>
    </ligand>
</feature>
<feature type="binding site" evidence="1">
    <location>
        <position position="251"/>
    </location>
    <ligand>
        <name>substrate</name>
    </ligand>
</feature>
<reference key="1">
    <citation type="journal article" date="2010" name="Genome Biol. Evol.">
        <title>Continuing evolution of Burkholderia mallei through genome reduction and large-scale rearrangements.</title>
        <authorList>
            <person name="Losada L."/>
            <person name="Ronning C.M."/>
            <person name="DeShazer D."/>
            <person name="Woods D."/>
            <person name="Fedorova N."/>
            <person name="Kim H.S."/>
            <person name="Shabalina S.A."/>
            <person name="Pearson T.R."/>
            <person name="Brinkac L."/>
            <person name="Tan P."/>
            <person name="Nandi T."/>
            <person name="Crabtree J."/>
            <person name="Badger J."/>
            <person name="Beckstrom-Sternberg S."/>
            <person name="Saqib M."/>
            <person name="Schutzer S.E."/>
            <person name="Keim P."/>
            <person name="Nierman W.C."/>
        </authorList>
    </citation>
    <scope>NUCLEOTIDE SEQUENCE [LARGE SCALE GENOMIC DNA]</scope>
    <source>
        <strain>668</strain>
    </source>
</reference>
<evidence type="ECO:0000255" key="1">
    <source>
        <dbReference type="HAMAP-Rule" id="MF_00435"/>
    </source>
</evidence>
<evidence type="ECO:0000255" key="2">
    <source>
        <dbReference type="PROSITE-ProRule" id="PRU01197"/>
    </source>
</evidence>
<evidence type="ECO:0000255" key="3">
    <source>
        <dbReference type="PROSITE-ProRule" id="PRU01198"/>
    </source>
</evidence>
<protein>
    <recommendedName>
        <fullName evidence="1">Ketol-acid reductoisomerase (NADP(+))</fullName>
        <shortName evidence="1">KARI</shortName>
        <ecNumber evidence="1">1.1.1.86</ecNumber>
    </recommendedName>
    <alternativeName>
        <fullName evidence="1">Acetohydroxy-acid isomeroreductase</fullName>
        <shortName evidence="1">AHIR</shortName>
    </alternativeName>
    <alternativeName>
        <fullName evidence="1">Alpha-keto-beta-hydroxylacyl reductoisomerase</fullName>
    </alternativeName>
    <alternativeName>
        <fullName evidence="1">Ketol-acid reductoisomerase type 1</fullName>
    </alternativeName>
    <alternativeName>
        <fullName evidence="1">Ketol-acid reductoisomerase type I</fullName>
    </alternativeName>
</protein>
<keyword id="KW-0028">Amino-acid biosynthesis</keyword>
<keyword id="KW-0100">Branched-chain amino acid biosynthesis</keyword>
<keyword id="KW-0460">Magnesium</keyword>
<keyword id="KW-0479">Metal-binding</keyword>
<keyword id="KW-0521">NADP</keyword>
<keyword id="KW-0560">Oxidoreductase</keyword>
<gene>
    <name evidence="1" type="primary">ilvC</name>
    <name type="ordered locus">BURPS668_1276</name>
</gene>
<comment type="function">
    <text evidence="1">Involved in the biosynthesis of branched-chain amino acids (BCAA). Catalyzes an alkyl-migration followed by a ketol-acid reduction of (S)-2-acetolactate (S2AL) to yield (R)-2,3-dihydroxy-isovalerate. In the isomerase reaction, S2AL is rearranged via a Mg-dependent methyl migration to produce 3-hydroxy-3-methyl-2-ketobutyrate (HMKB). In the reductase reaction, this 2-ketoacid undergoes a metal-dependent reduction by NADPH to yield (R)-2,3-dihydroxy-isovalerate.</text>
</comment>
<comment type="catalytic activity">
    <reaction evidence="1">
        <text>(2R)-2,3-dihydroxy-3-methylbutanoate + NADP(+) = (2S)-2-acetolactate + NADPH + H(+)</text>
        <dbReference type="Rhea" id="RHEA:22068"/>
        <dbReference type="ChEBI" id="CHEBI:15378"/>
        <dbReference type="ChEBI" id="CHEBI:49072"/>
        <dbReference type="ChEBI" id="CHEBI:57783"/>
        <dbReference type="ChEBI" id="CHEBI:58349"/>
        <dbReference type="ChEBI" id="CHEBI:58476"/>
        <dbReference type="EC" id="1.1.1.86"/>
    </reaction>
</comment>
<comment type="catalytic activity">
    <reaction evidence="1">
        <text>(2R,3R)-2,3-dihydroxy-3-methylpentanoate + NADP(+) = (S)-2-ethyl-2-hydroxy-3-oxobutanoate + NADPH + H(+)</text>
        <dbReference type="Rhea" id="RHEA:13493"/>
        <dbReference type="ChEBI" id="CHEBI:15378"/>
        <dbReference type="ChEBI" id="CHEBI:49256"/>
        <dbReference type="ChEBI" id="CHEBI:49258"/>
        <dbReference type="ChEBI" id="CHEBI:57783"/>
        <dbReference type="ChEBI" id="CHEBI:58349"/>
        <dbReference type="EC" id="1.1.1.86"/>
    </reaction>
</comment>
<comment type="cofactor">
    <cofactor evidence="1">
        <name>Mg(2+)</name>
        <dbReference type="ChEBI" id="CHEBI:18420"/>
    </cofactor>
    <text evidence="1">Binds 2 magnesium ions per subunit.</text>
</comment>
<comment type="pathway">
    <text evidence="1">Amino-acid biosynthesis; L-isoleucine biosynthesis; L-isoleucine from 2-oxobutanoate: step 2/4.</text>
</comment>
<comment type="pathway">
    <text evidence="1">Amino-acid biosynthesis; L-valine biosynthesis; L-valine from pyruvate: step 2/4.</text>
</comment>
<comment type="similarity">
    <text evidence="1">Belongs to the ketol-acid reductoisomerase family.</text>
</comment>
<organism>
    <name type="scientific">Burkholderia pseudomallei (strain 668)</name>
    <dbReference type="NCBI Taxonomy" id="320373"/>
    <lineage>
        <taxon>Bacteria</taxon>
        <taxon>Pseudomonadati</taxon>
        <taxon>Pseudomonadota</taxon>
        <taxon>Betaproteobacteria</taxon>
        <taxon>Burkholderiales</taxon>
        <taxon>Burkholderiaceae</taxon>
        <taxon>Burkholderia</taxon>
        <taxon>pseudomallei group</taxon>
    </lineage>
</organism>
<dbReference type="EC" id="1.1.1.86" evidence="1"/>
<dbReference type="EMBL" id="CP000570">
    <property type="protein sequence ID" value="ABN83118.1"/>
    <property type="molecule type" value="Genomic_DNA"/>
</dbReference>
<dbReference type="RefSeq" id="WP_004185539.1">
    <property type="nucleotide sequence ID" value="NC_009074.1"/>
</dbReference>
<dbReference type="SMR" id="A3N7K4"/>
<dbReference type="GeneID" id="93059680"/>
<dbReference type="KEGG" id="bpd:BURPS668_1276"/>
<dbReference type="HOGENOM" id="CLU_033821_0_1_4"/>
<dbReference type="UniPathway" id="UPA00047">
    <property type="reaction ID" value="UER00056"/>
</dbReference>
<dbReference type="UniPathway" id="UPA00049">
    <property type="reaction ID" value="UER00060"/>
</dbReference>
<dbReference type="GO" id="GO:0005829">
    <property type="term" value="C:cytosol"/>
    <property type="evidence" value="ECO:0007669"/>
    <property type="project" value="TreeGrafter"/>
</dbReference>
<dbReference type="GO" id="GO:0004455">
    <property type="term" value="F:ketol-acid reductoisomerase activity"/>
    <property type="evidence" value="ECO:0007669"/>
    <property type="project" value="UniProtKB-UniRule"/>
</dbReference>
<dbReference type="GO" id="GO:0000287">
    <property type="term" value="F:magnesium ion binding"/>
    <property type="evidence" value="ECO:0007669"/>
    <property type="project" value="UniProtKB-UniRule"/>
</dbReference>
<dbReference type="GO" id="GO:0050661">
    <property type="term" value="F:NADP binding"/>
    <property type="evidence" value="ECO:0007669"/>
    <property type="project" value="InterPro"/>
</dbReference>
<dbReference type="GO" id="GO:0009097">
    <property type="term" value="P:isoleucine biosynthetic process"/>
    <property type="evidence" value="ECO:0007669"/>
    <property type="project" value="UniProtKB-UniRule"/>
</dbReference>
<dbReference type="GO" id="GO:0009099">
    <property type="term" value="P:L-valine biosynthetic process"/>
    <property type="evidence" value="ECO:0007669"/>
    <property type="project" value="UniProtKB-UniRule"/>
</dbReference>
<dbReference type="FunFam" id="3.40.50.720:FF:000023">
    <property type="entry name" value="Ketol-acid reductoisomerase (NADP(+))"/>
    <property type="match status" value="1"/>
</dbReference>
<dbReference type="Gene3D" id="6.10.240.10">
    <property type="match status" value="1"/>
</dbReference>
<dbReference type="Gene3D" id="3.40.50.720">
    <property type="entry name" value="NAD(P)-binding Rossmann-like Domain"/>
    <property type="match status" value="1"/>
</dbReference>
<dbReference type="HAMAP" id="MF_00435">
    <property type="entry name" value="IlvC"/>
    <property type="match status" value="1"/>
</dbReference>
<dbReference type="InterPro" id="IPR008927">
    <property type="entry name" value="6-PGluconate_DH-like_C_sf"/>
</dbReference>
<dbReference type="InterPro" id="IPR013023">
    <property type="entry name" value="KARI"/>
</dbReference>
<dbReference type="InterPro" id="IPR000506">
    <property type="entry name" value="KARI_C"/>
</dbReference>
<dbReference type="InterPro" id="IPR013116">
    <property type="entry name" value="KARI_N"/>
</dbReference>
<dbReference type="InterPro" id="IPR014359">
    <property type="entry name" value="KARI_prok"/>
</dbReference>
<dbReference type="InterPro" id="IPR036291">
    <property type="entry name" value="NAD(P)-bd_dom_sf"/>
</dbReference>
<dbReference type="NCBIfam" id="TIGR00465">
    <property type="entry name" value="ilvC"/>
    <property type="match status" value="1"/>
</dbReference>
<dbReference type="NCBIfam" id="NF004017">
    <property type="entry name" value="PRK05479.1"/>
    <property type="match status" value="1"/>
</dbReference>
<dbReference type="NCBIfam" id="NF009940">
    <property type="entry name" value="PRK13403.1"/>
    <property type="match status" value="1"/>
</dbReference>
<dbReference type="PANTHER" id="PTHR21371">
    <property type="entry name" value="KETOL-ACID REDUCTOISOMERASE, MITOCHONDRIAL"/>
    <property type="match status" value="1"/>
</dbReference>
<dbReference type="PANTHER" id="PTHR21371:SF1">
    <property type="entry name" value="KETOL-ACID REDUCTOISOMERASE, MITOCHONDRIAL"/>
    <property type="match status" value="1"/>
</dbReference>
<dbReference type="Pfam" id="PF01450">
    <property type="entry name" value="KARI_C"/>
    <property type="match status" value="1"/>
</dbReference>
<dbReference type="Pfam" id="PF07991">
    <property type="entry name" value="KARI_N"/>
    <property type="match status" value="1"/>
</dbReference>
<dbReference type="PIRSF" id="PIRSF000116">
    <property type="entry name" value="IlvC_gammaproteo"/>
    <property type="match status" value="1"/>
</dbReference>
<dbReference type="SUPFAM" id="SSF48179">
    <property type="entry name" value="6-phosphogluconate dehydrogenase C-terminal domain-like"/>
    <property type="match status" value="1"/>
</dbReference>
<dbReference type="SUPFAM" id="SSF51735">
    <property type="entry name" value="NAD(P)-binding Rossmann-fold domains"/>
    <property type="match status" value="1"/>
</dbReference>
<dbReference type="PROSITE" id="PS51851">
    <property type="entry name" value="KARI_C"/>
    <property type="match status" value="1"/>
</dbReference>
<dbReference type="PROSITE" id="PS51850">
    <property type="entry name" value="KARI_N"/>
    <property type="match status" value="1"/>
</dbReference>
<accession>A3N7K4</accession>
<proteinExistence type="inferred from homology"/>
<sequence>MKVFYDKDADLSLIKGKQVTIIGYGSQGHAHALNLKDSGVNVTVGLRRGGASWSKAENAGLAVKEVAEAVKGADVVMMLLPDEQIAAVYAQEVHANIKEGAALAFAHGFNVHYGQVIPRADLDVIMVAPKAPGHTVRGTYAQGGGVPHLIAVAQDKSGAARDIALSYAAANGGGRAGIIETNFREETETDLFGEQAVLCGGTVELIKAGFETLVEAGYAPEMAYFECLHELKLIVDLIYEGGIANMNYSISNNAEYGEYVTGPRVVTEETKKAMKQCLTDIQTGEYAKSFILENKAGAPTLQSRRRLTAEHQIEQVGSKLRAMMPWIAKNKLVDQSKN</sequence>
<name>ILVC_BURP6</name>